<accession>P0DOL3</accession>
<accession>P33003</accession>
<proteinExistence type="evidence at transcript level"/>
<name>PG083_VAR67</name>
<feature type="chain" id="PRO_0000099584" description="Core protease OPG082">
    <location>
        <begin position="1"/>
        <end position="423"/>
    </location>
</feature>
<feature type="active site" evidence="2">
    <location>
        <position position="241"/>
    </location>
</feature>
<feature type="active site" evidence="2">
    <location>
        <position position="248"/>
    </location>
</feature>
<feature type="active site" evidence="2">
    <location>
        <position position="328"/>
    </location>
</feature>
<organismHost>
    <name type="scientific">Homo sapiens</name>
    <name type="common">Human</name>
    <dbReference type="NCBI Taxonomy" id="9606"/>
</organismHost>
<evidence type="ECO:0000250" key="1"/>
<evidence type="ECO:0000250" key="2">
    <source>
        <dbReference type="UniProtKB" id="P12926"/>
    </source>
</evidence>
<evidence type="ECO:0000305" key="3"/>
<dbReference type="EC" id="3.4.22.-" evidence="2"/>
<dbReference type="EMBL" id="X69198">
    <property type="protein sequence ID" value="CAA49002.1"/>
    <property type="molecule type" value="Genomic_DNA"/>
</dbReference>
<dbReference type="EMBL" id="X67119">
    <property type="protein sequence ID" value="CAA47561.1"/>
    <property type="molecule type" value="Genomic_DNA"/>
</dbReference>
<dbReference type="PIR" id="E36843">
    <property type="entry name" value="E36843"/>
</dbReference>
<dbReference type="KEGG" id="vg:1486462"/>
<dbReference type="Proteomes" id="UP000002060">
    <property type="component" value="Segment"/>
</dbReference>
<dbReference type="GO" id="GO:0044423">
    <property type="term" value="C:virion component"/>
    <property type="evidence" value="ECO:0007669"/>
    <property type="project" value="UniProtKB-KW"/>
</dbReference>
<dbReference type="GO" id="GO:0008234">
    <property type="term" value="F:cysteine-type peptidase activity"/>
    <property type="evidence" value="ECO:0007669"/>
    <property type="project" value="UniProtKB-KW"/>
</dbReference>
<dbReference type="GO" id="GO:0006508">
    <property type="term" value="P:proteolysis"/>
    <property type="evidence" value="ECO:0007669"/>
    <property type="project" value="UniProtKB-KW"/>
</dbReference>
<dbReference type="InterPro" id="IPR038765">
    <property type="entry name" value="Papain-like_cys_pep_sf"/>
</dbReference>
<dbReference type="InterPro" id="IPR004970">
    <property type="entry name" value="Peptidase_C57"/>
</dbReference>
<dbReference type="Pfam" id="PF03290">
    <property type="entry name" value="Peptidase_C57"/>
    <property type="match status" value="1"/>
</dbReference>
<dbReference type="SUPFAM" id="SSF54001">
    <property type="entry name" value="Cysteine proteinases"/>
    <property type="match status" value="1"/>
</dbReference>
<comment type="function">
    <text evidence="1 2">Late protein responsible for processing most or all of the viral core and membrane proteins known to undergo morphogenesis-associated proteolysis. These proteolytic events are involved in the transformation of immature virions (IV) into mature virions (MV). Probably cleaves at least the OPG129, OPG136, OPG098, and OPG144 precursors preferentially at Ala-Gly-|-Ala motifs. Also seems to process Ala-Gly-|-Ser and Ala-Gly-|-Thr motifs (By similarity).</text>
</comment>
<comment type="subcellular location">
    <subcellularLocation>
        <location evidence="2">Virion</location>
    </subcellularLocation>
    <text evidence="2">Present in the virion core.</text>
</comment>
<comment type="induction">
    <text>Expressed late in the viral replicative cycle.</text>
</comment>
<comment type="similarity">
    <text evidence="3">Belongs to the peptidase C57 family.</text>
</comment>
<gene>
    <name type="primary">OPG083</name>
    <name type="ORF">I7L</name>
</gene>
<organism>
    <name type="scientific">Variola virus (isolate Human/India/Ind3/1967)</name>
    <name type="common">VARV</name>
    <name type="synonym">Smallpox virus</name>
    <dbReference type="NCBI Taxonomy" id="587200"/>
    <lineage>
        <taxon>Viruses</taxon>
        <taxon>Varidnaviria</taxon>
        <taxon>Bamfordvirae</taxon>
        <taxon>Nucleocytoviricota</taxon>
        <taxon>Pokkesviricetes</taxon>
        <taxon>Chitovirales</taxon>
        <taxon>Poxviridae</taxon>
        <taxon>Chordopoxvirinae</taxon>
        <taxon>Orthopoxvirus</taxon>
        <taxon>Variola virus</taxon>
    </lineage>
</organism>
<keyword id="KW-0378">Hydrolase</keyword>
<keyword id="KW-0426">Late protein</keyword>
<keyword id="KW-0645">Protease</keyword>
<keyword id="KW-1185">Reference proteome</keyword>
<keyword id="KW-0788">Thiol protease</keyword>
<keyword id="KW-0946">Virion</keyword>
<reference key="1">
    <citation type="journal article" date="1993" name="FEBS Lett.">
        <title>Genes of variola and vaccinia viruses necessary to overcome the host protective mechanisms.</title>
        <authorList>
            <person name="Shchelkunov S.N."/>
            <person name="Blinov V.M."/>
            <person name="Sandakhchiev L.S."/>
        </authorList>
    </citation>
    <scope>NUCLEOTIDE SEQUENCE [LARGE SCALE GENOMIC DNA]</scope>
</reference>
<reference key="2">
    <citation type="journal article" date="1993" name="Virus Res.">
        <title>Analysis of the nucleotide sequence of a 43 kbp segment of the genome of variola virus India-1967 strain.</title>
        <authorList>
            <person name="Shchelkunov S.N."/>
            <person name="Blinov V.M."/>
            <person name="Resenchuk S.M."/>
            <person name="Totmenin A.V."/>
            <person name="Sandakhchiev L.S."/>
        </authorList>
    </citation>
    <scope>NUCLEOTIDE SEQUENCE [GENOMIC DNA]</scope>
</reference>
<sequence>MERYTDLVISKIPELGFTNLLCHIYSLAGLCSNIDVSKFLTNCNGYVVEKYDKSTTAGKVSCIPIGMMLELVESRHLSRPNSSDELDQKKELTDELKTRYHSIYDVFELPTSIPLAYFFKPRLREKVSKAIDFSQMDLKIDDLSRKGIHTGENPKVVKMKIEPERGAWMSNRSIKNLVSQFAYGSEVDYIGQFDMRFLNSLAIHEKFDAFMNKHILSYILKDKIKSSTSRFVMFGFCYLSHWKCVIYDKKQCLVSFYDSGGNIPTEFHHYNNFYFYSFSDGFNTNHRHSVLDNTNCDIDVLFRFFECIFGAKIGCINVEVNQLLESECGMFISLFMILCTRTPPKSFKSLKKVYTFFKFLADKKMTLFKSILFNLQDLSLDITETDNAGLKEYKRMEKWTKKSINVICDKLTTKLNRIVDDDE</sequence>
<protein>
    <recommendedName>
        <fullName>Core protease OPG082</fullName>
        <ecNumber evidence="2">3.4.22.-</ecNumber>
    </recommendedName>
    <alternativeName>
        <fullName>Core protease I7</fullName>
        <ecNumber>3.4.22.-</ecNumber>
    </alternativeName>
</protein>